<protein>
    <recommendedName>
        <fullName evidence="11">Peroxisomal fatty acid beta-oxidation multifunctional protein MFP2</fullName>
        <shortName evidence="10">AtMPF2</shortName>
    </recommendedName>
    <domain>
        <recommendedName>
            <fullName>Enoyl-CoA hydratase/3-2-trans-enoyl-CoA isomerase/3-hydroxybutyryl-CoA epimerase</fullName>
            <ecNumber evidence="3 5">4.2.1.17</ecNumber>
            <ecNumber evidence="11">5.1.2.3</ecNumber>
            <ecNumber evidence="11">5.3.3.8</ecNumber>
        </recommendedName>
    </domain>
    <domain>
        <recommendedName>
            <fullName>3-hydroxyacyl-CoA dehydrogenase</fullName>
            <ecNumber evidence="5 7">1.1.1.35</ecNumber>
        </recommendedName>
    </domain>
</protein>
<dbReference type="EC" id="4.2.1.17" evidence="3 5"/>
<dbReference type="EC" id="5.1.2.3" evidence="11"/>
<dbReference type="EC" id="5.3.3.8" evidence="11"/>
<dbReference type="EC" id="1.1.1.35" evidence="5 7"/>
<dbReference type="EMBL" id="AF123254">
    <property type="protein sequence ID" value="AAD18042.1"/>
    <property type="molecule type" value="mRNA"/>
</dbReference>
<dbReference type="EMBL" id="AC016827">
    <property type="protein sequence ID" value="AAF26990.1"/>
    <property type="molecule type" value="Genomic_DNA"/>
</dbReference>
<dbReference type="EMBL" id="CP002686">
    <property type="protein sequence ID" value="AEE74468.1"/>
    <property type="molecule type" value="Genomic_DNA"/>
</dbReference>
<dbReference type="EMBL" id="AY062621">
    <property type="protein sequence ID" value="AAL32699.1"/>
    <property type="molecule type" value="mRNA"/>
</dbReference>
<dbReference type="RefSeq" id="NP_187342.1">
    <property type="nucleotide sequence ID" value="NM_111566.4"/>
</dbReference>
<dbReference type="PDB" id="2WTB">
    <property type="method" value="X-ray"/>
    <property type="resolution" value="2.50 A"/>
    <property type="chains" value="A=1-725"/>
</dbReference>
<dbReference type="PDBsum" id="2WTB"/>
<dbReference type="SMR" id="Q9ZPI5"/>
<dbReference type="BioGRID" id="5205">
    <property type="interactions" value="11"/>
</dbReference>
<dbReference type="FunCoup" id="Q9ZPI5">
    <property type="interactions" value="2626"/>
</dbReference>
<dbReference type="STRING" id="3702.Q9ZPI5"/>
<dbReference type="SwissLipids" id="SLP:000000867"/>
<dbReference type="iPTMnet" id="Q9ZPI5"/>
<dbReference type="PaxDb" id="3702-AT3G06860.1"/>
<dbReference type="ProteomicsDB" id="250622"/>
<dbReference type="EnsemblPlants" id="AT3G06860.1">
    <property type="protein sequence ID" value="AT3G06860.1"/>
    <property type="gene ID" value="AT3G06860"/>
</dbReference>
<dbReference type="GeneID" id="819870"/>
<dbReference type="Gramene" id="AT3G06860.1">
    <property type="protein sequence ID" value="AT3G06860.1"/>
    <property type="gene ID" value="AT3G06860"/>
</dbReference>
<dbReference type="KEGG" id="ath:AT3G06860"/>
<dbReference type="Araport" id="AT3G06860"/>
<dbReference type="TAIR" id="AT3G06860">
    <property type="gene designation" value="MFP2"/>
</dbReference>
<dbReference type="eggNOG" id="KOG1683">
    <property type="taxonomic scope" value="Eukaryota"/>
</dbReference>
<dbReference type="HOGENOM" id="CLU_009834_16_3_1"/>
<dbReference type="InParanoid" id="Q9ZPI5"/>
<dbReference type="OMA" id="ESTTIRW"/>
<dbReference type="PhylomeDB" id="Q9ZPI5"/>
<dbReference type="BioCyc" id="ARA:AT3G06860-MONOMER"/>
<dbReference type="BioCyc" id="MetaCyc:AT3G06860-MONOMER"/>
<dbReference type="BRENDA" id="4.2.1.17">
    <property type="organism ID" value="399"/>
</dbReference>
<dbReference type="SABIO-RK" id="Q9ZPI5"/>
<dbReference type="UniPathway" id="UPA00659"/>
<dbReference type="CD-CODE" id="4299E36E">
    <property type="entry name" value="Nucleolus"/>
</dbReference>
<dbReference type="EvolutionaryTrace" id="Q9ZPI5"/>
<dbReference type="PRO" id="PR:Q9ZPI5"/>
<dbReference type="Proteomes" id="UP000006548">
    <property type="component" value="Chromosome 3"/>
</dbReference>
<dbReference type="ExpressionAtlas" id="Q9ZPI5">
    <property type="expression patterns" value="baseline and differential"/>
</dbReference>
<dbReference type="GO" id="GO:0005829">
    <property type="term" value="C:cytosol"/>
    <property type="evidence" value="ECO:0007005"/>
    <property type="project" value="TAIR"/>
</dbReference>
<dbReference type="GO" id="GO:0009514">
    <property type="term" value="C:glyoxysome"/>
    <property type="evidence" value="ECO:0007669"/>
    <property type="project" value="UniProtKB-SubCell"/>
</dbReference>
<dbReference type="GO" id="GO:0005730">
    <property type="term" value="C:nucleolus"/>
    <property type="evidence" value="ECO:0007005"/>
    <property type="project" value="TAIR"/>
</dbReference>
<dbReference type="GO" id="GO:0005777">
    <property type="term" value="C:peroxisome"/>
    <property type="evidence" value="ECO:0007005"/>
    <property type="project" value="TAIR"/>
</dbReference>
<dbReference type="GO" id="GO:0009505">
    <property type="term" value="C:plant-type cell wall"/>
    <property type="evidence" value="ECO:0007005"/>
    <property type="project" value="TAIR"/>
</dbReference>
<dbReference type="GO" id="GO:0009506">
    <property type="term" value="C:plasmodesma"/>
    <property type="evidence" value="ECO:0007005"/>
    <property type="project" value="TAIR"/>
</dbReference>
<dbReference type="GO" id="GO:0018812">
    <property type="term" value="F:3-hydroxyacyl-CoA dehydratase activity"/>
    <property type="evidence" value="ECO:0000314"/>
    <property type="project" value="UniProtKB"/>
</dbReference>
<dbReference type="GO" id="GO:0003857">
    <property type="term" value="F:3-hydroxyacyl-CoA dehydrogenase activity"/>
    <property type="evidence" value="ECO:0000314"/>
    <property type="project" value="UniProtKB"/>
</dbReference>
<dbReference type="GO" id="GO:0008692">
    <property type="term" value="F:3-hydroxybutyryl-CoA epimerase activity"/>
    <property type="evidence" value="ECO:0007669"/>
    <property type="project" value="UniProtKB-EC"/>
</dbReference>
<dbReference type="GO" id="GO:0004165">
    <property type="term" value="F:delta(3)-delta(2)-enoyl-CoA isomerase activity"/>
    <property type="evidence" value="ECO:0007669"/>
    <property type="project" value="UniProtKB-EC"/>
</dbReference>
<dbReference type="GO" id="GO:0070403">
    <property type="term" value="F:NAD+ binding"/>
    <property type="evidence" value="ECO:0007669"/>
    <property type="project" value="InterPro"/>
</dbReference>
<dbReference type="GO" id="GO:0006635">
    <property type="term" value="P:fatty acid beta-oxidation"/>
    <property type="evidence" value="ECO:0000270"/>
    <property type="project" value="TAIR"/>
</dbReference>
<dbReference type="CDD" id="cd06558">
    <property type="entry name" value="crotonase-like"/>
    <property type="match status" value="1"/>
</dbReference>
<dbReference type="DisProt" id="DP00654"/>
<dbReference type="FunFam" id="3.40.50.720:FF:000009">
    <property type="entry name" value="Fatty oxidation complex, alpha subunit"/>
    <property type="match status" value="1"/>
</dbReference>
<dbReference type="FunFam" id="1.10.1040.50:FF:000004">
    <property type="entry name" value="Peroxisomal fatty acid beta-oxidation multifunctional protein"/>
    <property type="match status" value="1"/>
</dbReference>
<dbReference type="FunFam" id="3.90.226.10:FF:000025">
    <property type="entry name" value="Peroxisomal fatty acid beta-oxidation multifunctional protein"/>
    <property type="match status" value="1"/>
</dbReference>
<dbReference type="Gene3D" id="1.10.1040.50">
    <property type="match status" value="1"/>
</dbReference>
<dbReference type="Gene3D" id="3.90.226.10">
    <property type="entry name" value="2-enoyl-CoA Hydratase, Chain A, domain 1"/>
    <property type="match status" value="1"/>
</dbReference>
<dbReference type="Gene3D" id="3.40.50.720">
    <property type="entry name" value="NAD(P)-binding Rossmann-like Domain"/>
    <property type="match status" value="1"/>
</dbReference>
<dbReference type="InterPro" id="IPR006180">
    <property type="entry name" value="3-OHacyl-CoA_DH_CS"/>
</dbReference>
<dbReference type="InterPro" id="IPR006176">
    <property type="entry name" value="3-OHacyl-CoA_DH_NAD-bd"/>
</dbReference>
<dbReference type="InterPro" id="IPR006108">
    <property type="entry name" value="3HC_DH_C"/>
</dbReference>
<dbReference type="InterPro" id="IPR008927">
    <property type="entry name" value="6-PGluconate_DH-like_C_sf"/>
</dbReference>
<dbReference type="InterPro" id="IPR029045">
    <property type="entry name" value="ClpP/crotonase-like_dom_sf"/>
</dbReference>
<dbReference type="InterPro" id="IPR018376">
    <property type="entry name" value="Enoyl-CoA_hyd/isom_CS"/>
</dbReference>
<dbReference type="InterPro" id="IPR001753">
    <property type="entry name" value="Enoyl-CoA_hydra/iso"/>
</dbReference>
<dbReference type="InterPro" id="IPR036291">
    <property type="entry name" value="NAD(P)-bd_dom_sf"/>
</dbReference>
<dbReference type="PANTHER" id="PTHR23309">
    <property type="entry name" value="3-HYDROXYACYL-COA DEHYROGENASE"/>
    <property type="match status" value="1"/>
</dbReference>
<dbReference type="PANTHER" id="PTHR23309:SF9">
    <property type="entry name" value="PEROXISOMAL FATTY ACID BETA-OXIDATION MULTIFUNCTIONAL PROTEIN MFP2"/>
    <property type="match status" value="1"/>
</dbReference>
<dbReference type="Pfam" id="PF00725">
    <property type="entry name" value="3HCDH"/>
    <property type="match status" value="1"/>
</dbReference>
<dbReference type="Pfam" id="PF02737">
    <property type="entry name" value="3HCDH_N"/>
    <property type="match status" value="1"/>
</dbReference>
<dbReference type="Pfam" id="PF00378">
    <property type="entry name" value="ECH_1"/>
    <property type="match status" value="1"/>
</dbReference>
<dbReference type="SUPFAM" id="SSF48179">
    <property type="entry name" value="6-phosphogluconate dehydrogenase C-terminal domain-like"/>
    <property type="match status" value="2"/>
</dbReference>
<dbReference type="SUPFAM" id="SSF52096">
    <property type="entry name" value="ClpP/crotonase"/>
    <property type="match status" value="1"/>
</dbReference>
<dbReference type="SUPFAM" id="SSF51735">
    <property type="entry name" value="NAD(P)-binding Rossmann-fold domains"/>
    <property type="match status" value="1"/>
</dbReference>
<dbReference type="PROSITE" id="PS00067">
    <property type="entry name" value="3HCDH"/>
    <property type="match status" value="1"/>
</dbReference>
<dbReference type="PROSITE" id="PS00166">
    <property type="entry name" value="ENOYL_COA_HYDRATASE"/>
    <property type="match status" value="1"/>
</dbReference>
<comment type="function">
    <text evidence="3 5 7 8 9">Involved in peroxisomal fatty acid beta-oxidation during seed germination. Possesses enoyl-CoA hydratase activity against long chain substrates (C14-C18) and 3-hydroxyacyl-CoA dehydrogenase activity against chains of variable sizes (C6-C18) (PubMed:10521521, PubMed:16507084, PubMed:20463021). Possesses 3-hydroxy-3-phenylpropionyl-CoA dehydrogenase activity and is involved in the peroxisomal beta-oxidation pathway for the biosynthesis of benzoic acid (BA). Required for the accumulation in seeds of substituted hydroxybenzoylated choline esters, which are BA-containing secondary metabolites (PubMed:24254312). Fatty acid beta-oxidation pathway in peroxisomes regulates gene silencing, histone acetylation and DNA methylation (PubMed:31064880).</text>
</comment>
<comment type="catalytic activity">
    <reaction evidence="3 5">
        <text>a (3S)-3-hydroxyacyl-CoA = a (2E)-enoyl-CoA + H2O</text>
        <dbReference type="Rhea" id="RHEA:16105"/>
        <dbReference type="ChEBI" id="CHEBI:15377"/>
        <dbReference type="ChEBI" id="CHEBI:57318"/>
        <dbReference type="ChEBI" id="CHEBI:58856"/>
        <dbReference type="EC" id="4.2.1.17"/>
    </reaction>
</comment>
<comment type="catalytic activity">
    <reaction evidence="3 5">
        <text>a 4-saturated-(3S)-3-hydroxyacyl-CoA = a (3E)-enoyl-CoA + H2O</text>
        <dbReference type="Rhea" id="RHEA:20724"/>
        <dbReference type="ChEBI" id="CHEBI:15377"/>
        <dbReference type="ChEBI" id="CHEBI:58521"/>
        <dbReference type="ChEBI" id="CHEBI:137480"/>
        <dbReference type="EC" id="4.2.1.17"/>
    </reaction>
</comment>
<comment type="catalytic activity">
    <reaction evidence="7">
        <text>(3S)-3-hydroxybutanoyl-CoA = (2E)-butenoyl-CoA + H2O</text>
        <dbReference type="Rhea" id="RHEA:26558"/>
        <dbReference type="ChEBI" id="CHEBI:15377"/>
        <dbReference type="ChEBI" id="CHEBI:57316"/>
        <dbReference type="ChEBI" id="CHEBI:57332"/>
    </reaction>
    <physiologicalReaction direction="right-to-left" evidence="7">
        <dbReference type="Rhea" id="RHEA:26560"/>
    </physiologicalReaction>
</comment>
<comment type="catalytic activity">
    <reaction evidence="7">
        <text>(3S)-hydroxyoctanoyl-CoA = (2E)-octenoyl-CoA + H2O</text>
        <dbReference type="Rhea" id="RHEA:31199"/>
        <dbReference type="ChEBI" id="CHEBI:15377"/>
        <dbReference type="ChEBI" id="CHEBI:62242"/>
        <dbReference type="ChEBI" id="CHEBI:62617"/>
    </reaction>
    <physiologicalReaction direction="right-to-left" evidence="7">
        <dbReference type="Rhea" id="RHEA:31201"/>
    </physiologicalReaction>
</comment>
<comment type="catalytic activity">
    <reaction evidence="7">
        <text>(3S)-3-hydroxydodecanoyl-CoA = (2E)-dodecenoyl-CoA + H2O</text>
        <dbReference type="Rhea" id="RHEA:31075"/>
        <dbReference type="ChEBI" id="CHEBI:15377"/>
        <dbReference type="ChEBI" id="CHEBI:57330"/>
        <dbReference type="ChEBI" id="CHEBI:62558"/>
    </reaction>
    <physiologicalReaction direction="right-to-left" evidence="7">
        <dbReference type="Rhea" id="RHEA:31077"/>
    </physiologicalReaction>
</comment>
<comment type="catalytic activity">
    <reaction evidence="7">
        <text>(3S)-hydroxytetradecanoyl-CoA = (2E)-tetradecenoyl-CoA + H2O</text>
        <dbReference type="Rhea" id="RHEA:31171"/>
        <dbReference type="ChEBI" id="CHEBI:15377"/>
        <dbReference type="ChEBI" id="CHEBI:61405"/>
        <dbReference type="ChEBI" id="CHEBI:62614"/>
    </reaction>
    <physiologicalReaction direction="right-to-left" evidence="7">
        <dbReference type="Rhea" id="RHEA:31173"/>
    </physiologicalReaction>
</comment>
<comment type="catalytic activity">
    <reaction evidence="7">
        <text>(3S)-hydroxyhexanoyl-CoA = (2E)-hexenoyl-CoA + H2O</text>
        <dbReference type="Rhea" id="RHEA:30547"/>
        <dbReference type="ChEBI" id="CHEBI:15377"/>
        <dbReference type="ChEBI" id="CHEBI:62075"/>
        <dbReference type="ChEBI" id="CHEBI:62077"/>
    </reaction>
    <physiologicalReaction direction="right-to-left" evidence="7">
        <dbReference type="Rhea" id="RHEA:30549"/>
    </physiologicalReaction>
</comment>
<comment type="catalytic activity">
    <reaction evidence="11">
        <text>a (3Z)-enoyl-CoA = a 4-saturated (2E)-enoyl-CoA</text>
        <dbReference type="Rhea" id="RHEA:45900"/>
        <dbReference type="ChEBI" id="CHEBI:85097"/>
        <dbReference type="ChEBI" id="CHEBI:85489"/>
        <dbReference type="EC" id="5.3.3.8"/>
    </reaction>
</comment>
<comment type="catalytic activity">
    <reaction evidence="11">
        <text>a (3E)-enoyl-CoA = a 4-saturated (2E)-enoyl-CoA</text>
        <dbReference type="Rhea" id="RHEA:45228"/>
        <dbReference type="ChEBI" id="CHEBI:58521"/>
        <dbReference type="ChEBI" id="CHEBI:85097"/>
        <dbReference type="EC" id="5.3.3.8"/>
    </reaction>
</comment>
<comment type="catalytic activity">
    <reaction evidence="11">
        <text>(3S)-3-hydroxybutanoyl-CoA = (3R)-3-hydroxybutanoyl-CoA</text>
        <dbReference type="Rhea" id="RHEA:21760"/>
        <dbReference type="ChEBI" id="CHEBI:57315"/>
        <dbReference type="ChEBI" id="CHEBI:57316"/>
        <dbReference type="EC" id="5.1.2.3"/>
    </reaction>
</comment>
<comment type="catalytic activity">
    <reaction evidence="5 7">
        <text>a (3S)-3-hydroxyacyl-CoA + NAD(+) = a 3-oxoacyl-CoA + NADH + H(+)</text>
        <dbReference type="Rhea" id="RHEA:22432"/>
        <dbReference type="ChEBI" id="CHEBI:15378"/>
        <dbReference type="ChEBI" id="CHEBI:57318"/>
        <dbReference type="ChEBI" id="CHEBI:57540"/>
        <dbReference type="ChEBI" id="CHEBI:57945"/>
        <dbReference type="ChEBI" id="CHEBI:90726"/>
        <dbReference type="EC" id="1.1.1.35"/>
    </reaction>
    <physiologicalReaction direction="left-to-right" evidence="7">
        <dbReference type="Rhea" id="RHEA:22433"/>
    </physiologicalReaction>
</comment>
<comment type="catalytic activity">
    <reaction evidence="7">
        <text>(3S)-3-hydroxybutanoyl-CoA + NAD(+) = acetoacetyl-CoA + NADH + H(+)</text>
        <dbReference type="Rhea" id="RHEA:30799"/>
        <dbReference type="ChEBI" id="CHEBI:15378"/>
        <dbReference type="ChEBI" id="CHEBI:57286"/>
        <dbReference type="ChEBI" id="CHEBI:57316"/>
        <dbReference type="ChEBI" id="CHEBI:57540"/>
        <dbReference type="ChEBI" id="CHEBI:57945"/>
    </reaction>
    <physiologicalReaction direction="left-to-right" evidence="7">
        <dbReference type="Rhea" id="RHEA:30800"/>
    </physiologicalReaction>
</comment>
<comment type="catalytic activity">
    <reaction evidence="7">
        <text>(3S)-hydroxyhexanoyl-CoA + NAD(+) = 3-oxohexanoyl-CoA + NADH + H(+)</text>
        <dbReference type="Rhea" id="RHEA:31143"/>
        <dbReference type="ChEBI" id="CHEBI:15378"/>
        <dbReference type="ChEBI" id="CHEBI:57540"/>
        <dbReference type="ChEBI" id="CHEBI:57945"/>
        <dbReference type="ChEBI" id="CHEBI:62075"/>
        <dbReference type="ChEBI" id="CHEBI:62418"/>
    </reaction>
    <physiologicalReaction direction="left-to-right" evidence="7">
        <dbReference type="Rhea" id="RHEA:31144"/>
    </physiologicalReaction>
</comment>
<comment type="catalytic activity">
    <reaction evidence="7">
        <text>(3S)-hydroxyoctanoyl-CoA + NAD(+) = 3-oxooctanoyl-CoA + NADH + H(+)</text>
        <dbReference type="Rhea" id="RHEA:31195"/>
        <dbReference type="ChEBI" id="CHEBI:15378"/>
        <dbReference type="ChEBI" id="CHEBI:57540"/>
        <dbReference type="ChEBI" id="CHEBI:57945"/>
        <dbReference type="ChEBI" id="CHEBI:62617"/>
        <dbReference type="ChEBI" id="CHEBI:62619"/>
    </reaction>
    <physiologicalReaction direction="left-to-right" evidence="7">
        <dbReference type="Rhea" id="RHEA:31196"/>
    </physiologicalReaction>
</comment>
<comment type="catalytic activity">
    <reaction evidence="7">
        <text>(3S)-3-hydroxydodecanoyl-CoA + NAD(+) = 3-oxododecanoyl-CoA + NADH + H(+)</text>
        <dbReference type="Rhea" id="RHEA:31179"/>
        <dbReference type="ChEBI" id="CHEBI:15378"/>
        <dbReference type="ChEBI" id="CHEBI:57540"/>
        <dbReference type="ChEBI" id="CHEBI:57945"/>
        <dbReference type="ChEBI" id="CHEBI:62558"/>
        <dbReference type="ChEBI" id="CHEBI:62615"/>
    </reaction>
    <physiologicalReaction direction="left-to-right" evidence="7">
        <dbReference type="Rhea" id="RHEA:31180"/>
    </physiologicalReaction>
</comment>
<comment type="catalytic activity">
    <reaction evidence="7">
        <text>(3S)-hydroxytetradecanoyl-CoA + NAD(+) = 3-oxotetradecanoyl-CoA + NADH + H(+)</text>
        <dbReference type="Rhea" id="RHEA:31167"/>
        <dbReference type="ChEBI" id="CHEBI:15378"/>
        <dbReference type="ChEBI" id="CHEBI:57540"/>
        <dbReference type="ChEBI" id="CHEBI:57945"/>
        <dbReference type="ChEBI" id="CHEBI:62543"/>
        <dbReference type="ChEBI" id="CHEBI:62614"/>
    </reaction>
    <physiologicalReaction direction="left-to-right" evidence="7">
        <dbReference type="Rhea" id="RHEA:31168"/>
    </physiologicalReaction>
</comment>
<comment type="biophysicochemical properties">
    <kinetics>
        <KM evidence="3">240 uM for crotonyl-CoA</KM>
    </kinetics>
</comment>
<comment type="pathway">
    <text evidence="11">Lipid metabolism; fatty acid beta-oxidation.</text>
</comment>
<comment type="subcellular location">
    <subcellularLocation>
        <location evidence="11">Glyoxysome</location>
    </subcellularLocation>
    <subcellularLocation>
        <location evidence="6">Peroxisome</location>
    </subcellularLocation>
</comment>
<comment type="tissue specificity">
    <text evidence="4">Highly expressed in senescing leaves and at lower levels in flowers and siliques.</text>
</comment>
<comment type="developmental stage">
    <text evidence="4">Expression increases rapidly during seed germination to reach a peak at 2-3 days after imbibition (DAI) and then declines to basal levels at 5 DAI.</text>
</comment>
<comment type="domain">
    <text evidence="1">The epimerase and isomerase activities are contained in the N-terminal region while the dehydrogenase activity is in the C-terminal region.</text>
</comment>
<comment type="disruption phenotype">
    <text evidence="5">Accumulation of long-chain acyl-CoA substrates and increased size of peroxisomes.</text>
</comment>
<comment type="similarity">
    <text evidence="11">In the N-terminal section; belongs to the enoyl-CoA hydratase/isomerase family.</text>
</comment>
<comment type="similarity">
    <text evidence="11">In the central section; belongs to the 3-hydroxyacyl-CoA dehydrogenase family.</text>
</comment>
<keyword id="KW-0002">3D-structure</keyword>
<keyword id="KW-0276">Fatty acid metabolism</keyword>
<keyword id="KW-0330">Glyoxysome</keyword>
<keyword id="KW-0413">Isomerase</keyword>
<keyword id="KW-0443">Lipid metabolism</keyword>
<keyword id="KW-0456">Lyase</keyword>
<keyword id="KW-0511">Multifunctional enzyme</keyword>
<keyword id="KW-0520">NAD</keyword>
<keyword id="KW-0560">Oxidoreductase</keyword>
<keyword id="KW-0576">Peroxisome</keyword>
<keyword id="KW-1185">Reference proteome</keyword>
<accession>Q9ZPI5</accession>
<name>MFP2_ARATH</name>
<sequence length="725" mass="78840">MDSRTKGKTVMEVGGDGVAVITLINPPVNSLSFDVLYNLKSNYEEALSRNDVKAIVITGAKGRFSGGFDISGFGEMQKGNVKEPKAGYISIDIITDLLEAARKPSVAAIDGLALGGGLELAMACHARISAPAAQLGLPELQLGVIPGFGGTQRLPRLVGLTKALEMILTSKPVKAEEGHSLGLIDAVVPPAELVTTARRWALDIVGRRKPWVSSVSKTDKLPPLGEAREILTFAKAQTLKRAPNMKHPLMCLDAIEVGIVSGPRAGLEKEAEVASQVVKLDTTKGLIHVFFSQRGTAKVPGVTDRGLVPRKIKKVAIIGGGLMGSGIATALILSNYPVILKEVNEKFLEAGIGRVKANLQSRVRKGSMSQEKFEKTMSLLKGSLDYESFRDVDMVIEAVIENISLKQQIFADLEKYCPQHCILASNTSTIDLNKIGERTKSQDRIVGAHFFSPAHIMPLLEIVRTNHTSAQVIVDLLDVGKKIKKTPVVVGNCTGFAVNRMFFPYTQAAMFLVECGADPYLIDRAISKFGMPMGPFRLCDLVGFGVAIATATQFIENFSERTYKSMIIPLMQEDKRAGEATRKGFYLYDDKRKAKPDPELKKYIEKARSISGVKLDPKLANLSEKDIIEMTFFPVVNEACRVFAEGIAVKAADLDIAGIMGMGFPPYRGGIMFWADSIGSKYIYSRLDEWSKAYGEFFKPCAFLAERGSKGVLLSAPVKQASSRL</sequence>
<gene>
    <name evidence="10" type="primary">MFP2</name>
    <name evidence="12" type="ordered locus">At3g06860</name>
    <name evidence="13" type="ORF">F17A9.1</name>
</gene>
<organism>
    <name type="scientific">Arabidopsis thaliana</name>
    <name type="common">Mouse-ear cress</name>
    <dbReference type="NCBI Taxonomy" id="3702"/>
    <lineage>
        <taxon>Eukaryota</taxon>
        <taxon>Viridiplantae</taxon>
        <taxon>Streptophyta</taxon>
        <taxon>Embryophyta</taxon>
        <taxon>Tracheophyta</taxon>
        <taxon>Spermatophyta</taxon>
        <taxon>Magnoliopsida</taxon>
        <taxon>eudicotyledons</taxon>
        <taxon>Gunneridae</taxon>
        <taxon>Pentapetalae</taxon>
        <taxon>rosids</taxon>
        <taxon>malvids</taxon>
        <taxon>Brassicales</taxon>
        <taxon>Brassicaceae</taxon>
        <taxon>Camelineae</taxon>
        <taxon>Arabidopsis</taxon>
    </lineage>
</organism>
<feature type="chain" id="PRO_0000401371" description="Peroxisomal fatty acid beta-oxidation multifunctional protein MFP2">
    <location>
        <begin position="1"/>
        <end position="725"/>
    </location>
</feature>
<feature type="short sequence motif" description="Microbody targeting signal" evidence="11">
    <location>
        <begin position="723"/>
        <end position="725"/>
    </location>
</feature>
<feature type="active site" description="Nucleophile" evidence="2">
    <location>
        <position position="119"/>
    </location>
</feature>
<feature type="active site" description="Proton acceptor" evidence="2">
    <location>
        <position position="139"/>
    </location>
</feature>
<feature type="strand" evidence="14">
    <location>
        <begin position="8"/>
        <end position="13"/>
    </location>
</feature>
<feature type="strand" evidence="14">
    <location>
        <begin position="17"/>
        <end position="24"/>
    </location>
</feature>
<feature type="turn" evidence="14">
    <location>
        <begin position="26"/>
        <end position="29"/>
    </location>
</feature>
<feature type="helix" evidence="14">
    <location>
        <begin position="33"/>
        <end position="46"/>
    </location>
</feature>
<feature type="strand" evidence="14">
    <location>
        <begin position="54"/>
        <end position="62"/>
    </location>
</feature>
<feature type="strand" evidence="14">
    <location>
        <begin position="85"/>
        <end position="87"/>
    </location>
</feature>
<feature type="helix" evidence="14">
    <location>
        <begin position="88"/>
        <end position="92"/>
    </location>
</feature>
<feature type="helix" evidence="14">
    <location>
        <begin position="93"/>
        <end position="99"/>
    </location>
</feature>
<feature type="strand" evidence="14">
    <location>
        <begin position="101"/>
        <end position="103"/>
    </location>
</feature>
<feature type="strand" evidence="14">
    <location>
        <begin position="105"/>
        <end position="109"/>
    </location>
</feature>
<feature type="strand" evidence="14">
    <location>
        <begin position="111"/>
        <end position="114"/>
    </location>
</feature>
<feature type="helix" evidence="14">
    <location>
        <begin position="116"/>
        <end position="123"/>
    </location>
</feature>
<feature type="strand" evidence="14">
    <location>
        <begin position="124"/>
        <end position="129"/>
    </location>
</feature>
<feature type="strand" evidence="14">
    <location>
        <begin position="134"/>
        <end position="136"/>
    </location>
</feature>
<feature type="helix" evidence="14">
    <location>
        <begin position="139"/>
        <end position="142"/>
    </location>
</feature>
<feature type="helix" evidence="14">
    <location>
        <begin position="150"/>
        <end position="158"/>
    </location>
</feature>
<feature type="helix" evidence="14">
    <location>
        <begin position="160"/>
        <end position="169"/>
    </location>
</feature>
<feature type="helix" evidence="14">
    <location>
        <begin position="175"/>
        <end position="180"/>
    </location>
</feature>
<feature type="strand" evidence="14">
    <location>
        <begin position="185"/>
        <end position="187"/>
    </location>
</feature>
<feature type="turn" evidence="14">
    <location>
        <begin position="190"/>
        <end position="192"/>
    </location>
</feature>
<feature type="helix" evidence="14">
    <location>
        <begin position="193"/>
        <end position="205"/>
    </location>
</feature>
<feature type="helix" evidence="14">
    <location>
        <begin position="214"/>
        <end position="216"/>
    </location>
</feature>
<feature type="helix" evidence="14">
    <location>
        <begin position="224"/>
        <end position="241"/>
    </location>
</feature>
<feature type="helix" evidence="14">
    <location>
        <begin position="247"/>
        <end position="260"/>
    </location>
</feature>
<feature type="helix" evidence="14">
    <location>
        <begin position="263"/>
        <end position="277"/>
    </location>
</feature>
<feature type="helix" evidence="14">
    <location>
        <begin position="281"/>
        <end position="294"/>
    </location>
</feature>
<feature type="helix" evidence="14">
    <location>
        <begin position="295"/>
        <end position="297"/>
    </location>
</feature>
<feature type="turn" evidence="14">
    <location>
        <begin position="300"/>
        <end position="302"/>
    </location>
</feature>
<feature type="strand" evidence="14">
    <location>
        <begin position="303"/>
        <end position="305"/>
    </location>
</feature>
<feature type="strand" evidence="14">
    <location>
        <begin position="315"/>
        <end position="318"/>
    </location>
</feature>
<feature type="helix" evidence="14">
    <location>
        <begin position="322"/>
        <end position="332"/>
    </location>
</feature>
<feature type="turn" evidence="14">
    <location>
        <begin position="333"/>
        <end position="335"/>
    </location>
</feature>
<feature type="strand" evidence="14">
    <location>
        <begin position="338"/>
        <end position="341"/>
    </location>
</feature>
<feature type="helix" evidence="14">
    <location>
        <begin position="345"/>
        <end position="361"/>
    </location>
</feature>
<feature type="helix" evidence="14">
    <location>
        <begin position="372"/>
        <end position="375"/>
    </location>
</feature>
<feature type="turn" evidence="14">
    <location>
        <begin position="376"/>
        <end position="378"/>
    </location>
</feature>
<feature type="strand" evidence="14">
    <location>
        <begin position="379"/>
        <end position="386"/>
    </location>
</feature>
<feature type="helix" evidence="14">
    <location>
        <begin position="387"/>
        <end position="389"/>
    </location>
</feature>
<feature type="strand" evidence="14">
    <location>
        <begin position="393"/>
        <end position="397"/>
    </location>
</feature>
<feature type="helix" evidence="14">
    <location>
        <begin position="403"/>
        <end position="416"/>
    </location>
</feature>
<feature type="strand" evidence="14">
    <location>
        <begin position="422"/>
        <end position="425"/>
    </location>
</feature>
<feature type="strand" evidence="14">
    <location>
        <begin position="428"/>
        <end position="430"/>
    </location>
</feature>
<feature type="helix" evidence="14">
    <location>
        <begin position="432"/>
        <end position="435"/>
    </location>
</feature>
<feature type="turn" evidence="14">
    <location>
        <begin position="436"/>
        <end position="438"/>
    </location>
</feature>
<feature type="turn" evidence="14">
    <location>
        <begin position="442"/>
        <end position="444"/>
    </location>
</feature>
<feature type="strand" evidence="14">
    <location>
        <begin position="445"/>
        <end position="450"/>
    </location>
</feature>
<feature type="turn" evidence="14">
    <location>
        <begin position="454"/>
        <end position="456"/>
    </location>
</feature>
<feature type="strand" evidence="14">
    <location>
        <begin position="459"/>
        <end position="464"/>
    </location>
</feature>
<feature type="helix" evidence="14">
    <location>
        <begin position="470"/>
        <end position="482"/>
    </location>
</feature>
<feature type="strand" evidence="14">
    <location>
        <begin position="486"/>
        <end position="493"/>
    </location>
</feature>
<feature type="turn" evidence="14">
    <location>
        <begin position="494"/>
        <end position="497"/>
    </location>
</feature>
<feature type="helix" evidence="14">
    <location>
        <begin position="498"/>
        <end position="514"/>
    </location>
</feature>
<feature type="helix" evidence="14">
    <location>
        <begin position="519"/>
        <end position="529"/>
    </location>
</feature>
<feature type="helix" evidence="14">
    <location>
        <begin position="535"/>
        <end position="542"/>
    </location>
</feature>
<feature type="helix" evidence="14">
    <location>
        <begin position="544"/>
        <end position="557"/>
    </location>
</feature>
<feature type="helix" evidence="14">
    <location>
        <begin position="559"/>
        <end position="561"/>
    </location>
</feature>
<feature type="helix" evidence="14">
    <location>
        <begin position="567"/>
        <end position="572"/>
    </location>
</feature>
<feature type="helix" evidence="14">
    <location>
        <begin position="605"/>
        <end position="610"/>
    </location>
</feature>
<feature type="turn" evidence="14">
    <location>
        <begin position="618"/>
        <end position="621"/>
    </location>
</feature>
<feature type="helix" evidence="14">
    <location>
        <begin position="624"/>
        <end position="644"/>
    </location>
</feature>
<feature type="strand" evidence="14">
    <location>
        <begin position="647"/>
        <end position="649"/>
    </location>
</feature>
<feature type="helix" evidence="14">
    <location>
        <begin position="651"/>
        <end position="662"/>
    </location>
</feature>
<feature type="helix" evidence="14">
    <location>
        <begin position="666"/>
        <end position="668"/>
    </location>
</feature>
<feature type="helix" evidence="14">
    <location>
        <begin position="671"/>
        <end position="678"/>
    </location>
</feature>
<feature type="helix" evidence="14">
    <location>
        <begin position="680"/>
        <end position="694"/>
    </location>
</feature>
<feature type="helix" evidence="14">
    <location>
        <begin position="696"/>
        <end position="698"/>
    </location>
</feature>
<feature type="helix" evidence="14">
    <location>
        <begin position="702"/>
        <end position="710"/>
    </location>
</feature>
<feature type="strand" evidence="14">
    <location>
        <begin position="714"/>
        <end position="716"/>
    </location>
</feature>
<evidence type="ECO:0000250" key="1"/>
<evidence type="ECO:0000255" key="2"/>
<evidence type="ECO:0000269" key="3">
    <source>
    </source>
</evidence>
<evidence type="ECO:0000269" key="4">
    <source>
    </source>
</evidence>
<evidence type="ECO:0000269" key="5">
    <source>
    </source>
</evidence>
<evidence type="ECO:0000269" key="6">
    <source>
    </source>
</evidence>
<evidence type="ECO:0000269" key="7">
    <source>
    </source>
</evidence>
<evidence type="ECO:0000269" key="8">
    <source>
    </source>
</evidence>
<evidence type="ECO:0000269" key="9">
    <source>
    </source>
</evidence>
<evidence type="ECO:0000303" key="10">
    <source>
    </source>
</evidence>
<evidence type="ECO:0000305" key="11"/>
<evidence type="ECO:0000312" key="12">
    <source>
        <dbReference type="Araport" id="AT3G06860"/>
    </source>
</evidence>
<evidence type="ECO:0000312" key="13">
    <source>
        <dbReference type="EMBL" id="AAF26990.1"/>
    </source>
</evidence>
<evidence type="ECO:0007829" key="14">
    <source>
        <dbReference type="PDB" id="2WTB"/>
    </source>
</evidence>
<proteinExistence type="evidence at protein level"/>
<reference key="1">
    <citation type="journal article" date="1999" name="Plant Cell">
        <title>A defect in beta-oxidation causes abnormal inflorescence development in Arabidopsis.</title>
        <authorList>
            <person name="Richmond T.A."/>
            <person name="Bleecker A.B."/>
        </authorList>
    </citation>
    <scope>NUCLEOTIDE SEQUENCE [MRNA]</scope>
    <scope>FUNCTION</scope>
    <scope>CATALYTIC ACTIVITY</scope>
    <scope>BIOPHYSICOCHEMICAL PROPERTIES</scope>
</reference>
<reference key="2">
    <citation type="journal article" date="2000" name="Nature">
        <title>Sequence and analysis of chromosome 3 of the plant Arabidopsis thaliana.</title>
        <authorList>
            <person name="Salanoubat M."/>
            <person name="Lemcke K."/>
            <person name="Rieger M."/>
            <person name="Ansorge W."/>
            <person name="Unseld M."/>
            <person name="Fartmann B."/>
            <person name="Valle G."/>
            <person name="Bloecker H."/>
            <person name="Perez-Alonso M."/>
            <person name="Obermaier B."/>
            <person name="Delseny M."/>
            <person name="Boutry M."/>
            <person name="Grivell L.A."/>
            <person name="Mache R."/>
            <person name="Puigdomenech P."/>
            <person name="De Simone V."/>
            <person name="Choisne N."/>
            <person name="Artiguenave F."/>
            <person name="Robert C."/>
            <person name="Brottier P."/>
            <person name="Wincker P."/>
            <person name="Cattolico L."/>
            <person name="Weissenbach J."/>
            <person name="Saurin W."/>
            <person name="Quetier F."/>
            <person name="Schaefer M."/>
            <person name="Mueller-Auer S."/>
            <person name="Gabel C."/>
            <person name="Fuchs M."/>
            <person name="Benes V."/>
            <person name="Wurmbach E."/>
            <person name="Drzonek H."/>
            <person name="Erfle H."/>
            <person name="Jordan N."/>
            <person name="Bangert S."/>
            <person name="Wiedelmann R."/>
            <person name="Kranz H."/>
            <person name="Voss H."/>
            <person name="Holland R."/>
            <person name="Brandt P."/>
            <person name="Nyakatura G."/>
            <person name="Vezzi A."/>
            <person name="D'Angelo M."/>
            <person name="Pallavicini A."/>
            <person name="Toppo S."/>
            <person name="Simionati B."/>
            <person name="Conrad A."/>
            <person name="Hornischer K."/>
            <person name="Kauer G."/>
            <person name="Loehnert T.-H."/>
            <person name="Nordsiek G."/>
            <person name="Reichelt J."/>
            <person name="Scharfe M."/>
            <person name="Schoen O."/>
            <person name="Bargues M."/>
            <person name="Terol J."/>
            <person name="Climent J."/>
            <person name="Navarro P."/>
            <person name="Collado C."/>
            <person name="Perez-Perez A."/>
            <person name="Ottenwaelder B."/>
            <person name="Duchemin D."/>
            <person name="Cooke R."/>
            <person name="Laudie M."/>
            <person name="Berger-Llauro C."/>
            <person name="Purnelle B."/>
            <person name="Masuy D."/>
            <person name="de Haan M."/>
            <person name="Maarse A.C."/>
            <person name="Alcaraz J.-P."/>
            <person name="Cottet A."/>
            <person name="Casacuberta E."/>
            <person name="Monfort A."/>
            <person name="Argiriou A."/>
            <person name="Flores M."/>
            <person name="Liguori R."/>
            <person name="Vitale D."/>
            <person name="Mannhaupt G."/>
            <person name="Haase D."/>
            <person name="Schoof H."/>
            <person name="Rudd S."/>
            <person name="Zaccaria P."/>
            <person name="Mewes H.-W."/>
            <person name="Mayer K.F.X."/>
            <person name="Kaul S."/>
            <person name="Town C.D."/>
            <person name="Koo H.L."/>
            <person name="Tallon L.J."/>
            <person name="Jenkins J."/>
            <person name="Rooney T."/>
            <person name="Rizzo M."/>
            <person name="Walts A."/>
            <person name="Utterback T."/>
            <person name="Fujii C.Y."/>
            <person name="Shea T.P."/>
            <person name="Creasy T.H."/>
            <person name="Haas B."/>
            <person name="Maiti R."/>
            <person name="Wu D."/>
            <person name="Peterson J."/>
            <person name="Van Aken S."/>
            <person name="Pai G."/>
            <person name="Militscher J."/>
            <person name="Sellers P."/>
            <person name="Gill J.E."/>
            <person name="Feldblyum T.V."/>
            <person name="Preuss D."/>
            <person name="Lin X."/>
            <person name="Nierman W.C."/>
            <person name="Salzberg S.L."/>
            <person name="White O."/>
            <person name="Venter J.C."/>
            <person name="Fraser C.M."/>
            <person name="Kaneko T."/>
            <person name="Nakamura Y."/>
            <person name="Sato S."/>
            <person name="Kato T."/>
            <person name="Asamizu E."/>
            <person name="Sasamoto S."/>
            <person name="Kimura T."/>
            <person name="Idesawa K."/>
            <person name="Kawashima K."/>
            <person name="Kishida Y."/>
            <person name="Kiyokawa C."/>
            <person name="Kohara M."/>
            <person name="Matsumoto M."/>
            <person name="Matsuno A."/>
            <person name="Muraki A."/>
            <person name="Nakayama S."/>
            <person name="Nakazaki N."/>
            <person name="Shinpo S."/>
            <person name="Takeuchi C."/>
            <person name="Wada T."/>
            <person name="Watanabe A."/>
            <person name="Yamada M."/>
            <person name="Yasuda M."/>
            <person name="Tabata S."/>
        </authorList>
    </citation>
    <scope>NUCLEOTIDE SEQUENCE [LARGE SCALE GENOMIC DNA]</scope>
    <source>
        <strain>cv. Columbia</strain>
    </source>
</reference>
<reference key="3">
    <citation type="journal article" date="2017" name="Plant J.">
        <title>Araport11: a complete reannotation of the Arabidopsis thaliana reference genome.</title>
        <authorList>
            <person name="Cheng C.Y."/>
            <person name="Krishnakumar V."/>
            <person name="Chan A.P."/>
            <person name="Thibaud-Nissen F."/>
            <person name="Schobel S."/>
            <person name="Town C.D."/>
        </authorList>
    </citation>
    <scope>GENOME REANNOTATION</scope>
    <source>
        <strain>cv. Columbia</strain>
    </source>
</reference>
<reference key="4">
    <citation type="journal article" date="2003" name="Science">
        <title>Empirical analysis of transcriptional activity in the Arabidopsis genome.</title>
        <authorList>
            <person name="Yamada K."/>
            <person name="Lim J."/>
            <person name="Dale J.M."/>
            <person name="Chen H."/>
            <person name="Shinn P."/>
            <person name="Palm C.J."/>
            <person name="Southwick A.M."/>
            <person name="Wu H.C."/>
            <person name="Kim C.J."/>
            <person name="Nguyen M."/>
            <person name="Pham P.K."/>
            <person name="Cheuk R.F."/>
            <person name="Karlin-Newmann G."/>
            <person name="Liu S.X."/>
            <person name="Lam B."/>
            <person name="Sakano H."/>
            <person name="Wu T."/>
            <person name="Yu G."/>
            <person name="Miranda M."/>
            <person name="Quach H.L."/>
            <person name="Tripp M."/>
            <person name="Chang C.H."/>
            <person name="Lee J.M."/>
            <person name="Toriumi M.J."/>
            <person name="Chan M.M."/>
            <person name="Tang C.C."/>
            <person name="Onodera C.S."/>
            <person name="Deng J.M."/>
            <person name="Akiyama K."/>
            <person name="Ansari Y."/>
            <person name="Arakawa T."/>
            <person name="Banh J."/>
            <person name="Banno F."/>
            <person name="Bowser L."/>
            <person name="Brooks S.Y."/>
            <person name="Carninci P."/>
            <person name="Chao Q."/>
            <person name="Choy N."/>
            <person name="Enju A."/>
            <person name="Goldsmith A.D."/>
            <person name="Gurjal M."/>
            <person name="Hansen N.F."/>
            <person name="Hayashizaki Y."/>
            <person name="Johnson-Hopson C."/>
            <person name="Hsuan V.W."/>
            <person name="Iida K."/>
            <person name="Karnes M."/>
            <person name="Khan S."/>
            <person name="Koesema E."/>
            <person name="Ishida J."/>
            <person name="Jiang P.X."/>
            <person name="Jones T."/>
            <person name="Kawai J."/>
            <person name="Kamiya A."/>
            <person name="Meyers C."/>
            <person name="Nakajima M."/>
            <person name="Narusaka M."/>
            <person name="Seki M."/>
            <person name="Sakurai T."/>
            <person name="Satou M."/>
            <person name="Tamse R."/>
            <person name="Vaysberg M."/>
            <person name="Wallender E.K."/>
            <person name="Wong C."/>
            <person name="Yamamura Y."/>
            <person name="Yuan S."/>
            <person name="Shinozaki K."/>
            <person name="Davis R.W."/>
            <person name="Theologis A."/>
            <person name="Ecker J.R."/>
        </authorList>
    </citation>
    <scope>NUCLEOTIDE SEQUENCE [LARGE SCALE MRNA]</scope>
    <source>
        <strain>cv. Columbia</strain>
    </source>
</reference>
<reference key="5">
    <citation type="journal article" date="2000" name="Biochem. Soc. Trans.">
        <title>The multifunctional protein AtMFP2 is co-ordinately expressed with other genes of fatty acid beta-oxidation during seed germination in Arabidopsis thaliana (L.) Heynh.</title>
        <authorList>
            <person name="Eastmond P.J."/>
            <person name="Graham I.A."/>
        </authorList>
    </citation>
    <scope>TISSUE SPECIFICITY</scope>
    <scope>DEVELOPMENTAL STAGE</scope>
</reference>
<reference key="6">
    <citation type="journal article" date="2006" name="Plant J.">
        <title>The Arabidopsis thaliana multifunctional protein gene (MFP2) of peroxisomal beta-oxidation is essential for seedling establishment.</title>
        <authorList>
            <person name="Rylott E.L."/>
            <person name="Eastmond P.J."/>
            <person name="Gilday A.D."/>
            <person name="Slocombe S.P."/>
            <person name="Larson T.R."/>
            <person name="Baker A."/>
            <person name="Graham I.A."/>
        </authorList>
    </citation>
    <scope>FUNCTION</scope>
    <scope>CATALYTIC ACTIVITY</scope>
    <scope>DISRUPTION PHENOTYPE</scope>
</reference>
<reference key="7">
    <citation type="journal article" date="2007" name="Mol. Cell. Proteomics">
        <title>Multidimensional protein identification technology (MudPIT) analysis of ubiquitinated proteins in plants.</title>
        <authorList>
            <person name="Maor R."/>
            <person name="Jones A."/>
            <person name="Nuehse T.S."/>
            <person name="Studholme D.J."/>
            <person name="Peck S.C."/>
            <person name="Shirasu K."/>
        </authorList>
    </citation>
    <scope>IDENTIFICATION BY MASS SPECTROMETRY [LARGE SCALE ANALYSIS]</scope>
    <source>
        <strain>cv. Landsberg erecta</strain>
    </source>
</reference>
<reference key="8">
    <citation type="journal article" date="2007" name="Plant Cell">
        <title>Proteome analysis of Arabidopsis leaf peroxisomes reveals novel targeting peptides, metabolic pathways, and defense mechanisms.</title>
        <authorList>
            <person name="Reumann S."/>
            <person name="Babujee L."/>
            <person name="Ma C."/>
            <person name="Wienkoop S."/>
            <person name="Siemsen T."/>
            <person name="Antonicelli G.E."/>
            <person name="Rasche N."/>
            <person name="Lueder F."/>
            <person name="Weckwerth W."/>
            <person name="Jahn O."/>
        </authorList>
    </citation>
    <scope>IDENTIFICATION BY MASS SPECTROMETRY</scope>
    <scope>SUBCELLULAR LOCATION</scope>
</reference>
<reference key="9">
    <citation type="journal article" date="2014" name="Plant Physiol.">
        <title>Peroxisomal ATP-binding cassette transporter COMATOSE and the multifunctional protein abnormal INFLORESCENCE MERISTEM are required for the production of benzoylated metabolites in Arabidopsis seeds.</title>
        <authorList>
            <person name="Bussell J.D."/>
            <person name="Reichelt M."/>
            <person name="Wiszniewski A.A."/>
            <person name="Gershenzon J."/>
            <person name="Smith S.M."/>
        </authorList>
    </citation>
    <scope>FUNCTION</scope>
</reference>
<reference key="10">
    <citation type="journal article" date="2019" name="Proc. Natl. Acad. Sci. U.S.A.">
        <title>Peroxisomal beta-oxidation regulates histone acetylation and DNA methylation in Arabidopsis.</title>
        <authorList>
            <person name="Wang L."/>
            <person name="Wang C."/>
            <person name="Liu X."/>
            <person name="Cheng J."/>
            <person name="Li S."/>
            <person name="Zhu J.K."/>
            <person name="Gong Z."/>
        </authorList>
    </citation>
    <scope>FUNCTION</scope>
</reference>
<reference key="11">
    <citation type="journal article" date="2010" name="J. Biol. Chem.">
        <title>The multifunctional protein in peroxisomal beta-oxidation: structure and substrate specificity of the Arabidopsis thaliana protein MFP2.</title>
        <authorList>
            <person name="Arent S."/>
            <person name="Christensen C.E."/>
            <person name="Pye V.E."/>
            <person name="Noergaard A."/>
            <person name="Henriksen A."/>
        </authorList>
    </citation>
    <scope>X-RAY CRYSTALLOGRAPHY (2.5 ANGSTROMS)</scope>
    <scope>FUNCTION</scope>
    <scope>CATALYTIC ACTIVITY</scope>
</reference>